<dbReference type="EC" id="7.6.2.-" evidence="1"/>
<dbReference type="EMBL" id="AE004091">
    <property type="protein sequence ID" value="AAG06375.1"/>
    <property type="molecule type" value="Genomic_DNA"/>
</dbReference>
<dbReference type="PIR" id="D83271">
    <property type="entry name" value="D83271"/>
</dbReference>
<dbReference type="RefSeq" id="NP_251677.1">
    <property type="nucleotide sequence ID" value="NC_002516.2"/>
</dbReference>
<dbReference type="RefSeq" id="WP_003091168.1">
    <property type="nucleotide sequence ID" value="NZ_QZGE01000009.1"/>
</dbReference>
<dbReference type="SMR" id="Q9HZL7"/>
<dbReference type="FunCoup" id="Q9HZL7">
    <property type="interactions" value="442"/>
</dbReference>
<dbReference type="STRING" id="208964.PA2987"/>
<dbReference type="PaxDb" id="208964-PA2987"/>
<dbReference type="DNASU" id="880597"/>
<dbReference type="GeneID" id="880597"/>
<dbReference type="KEGG" id="pae:PA2987"/>
<dbReference type="PATRIC" id="fig|208964.12.peg.3134"/>
<dbReference type="PseudoCAP" id="PA2987"/>
<dbReference type="HOGENOM" id="CLU_000604_1_22_6"/>
<dbReference type="InParanoid" id="Q9HZL7"/>
<dbReference type="OrthoDB" id="9801477at2"/>
<dbReference type="PhylomeDB" id="Q9HZL7"/>
<dbReference type="BioCyc" id="PAER208964:G1FZ6-3039-MONOMER"/>
<dbReference type="Proteomes" id="UP000002438">
    <property type="component" value="Chromosome"/>
</dbReference>
<dbReference type="GO" id="GO:0005886">
    <property type="term" value="C:plasma membrane"/>
    <property type="evidence" value="ECO:0000318"/>
    <property type="project" value="GO_Central"/>
</dbReference>
<dbReference type="GO" id="GO:0005524">
    <property type="term" value="F:ATP binding"/>
    <property type="evidence" value="ECO:0007669"/>
    <property type="project" value="UniProtKB-KW"/>
</dbReference>
<dbReference type="GO" id="GO:0016887">
    <property type="term" value="F:ATP hydrolysis activity"/>
    <property type="evidence" value="ECO:0007669"/>
    <property type="project" value="InterPro"/>
</dbReference>
<dbReference type="GO" id="GO:0022857">
    <property type="term" value="F:transmembrane transporter activity"/>
    <property type="evidence" value="ECO:0000318"/>
    <property type="project" value="GO_Central"/>
</dbReference>
<dbReference type="GO" id="GO:0044874">
    <property type="term" value="P:lipoprotein localization to outer membrane"/>
    <property type="evidence" value="ECO:0000314"/>
    <property type="project" value="PseudoCAP"/>
</dbReference>
<dbReference type="GO" id="GO:0089705">
    <property type="term" value="P:protein localization to outer membrane"/>
    <property type="evidence" value="ECO:0000314"/>
    <property type="project" value="CACAO"/>
</dbReference>
<dbReference type="GO" id="GO:0055085">
    <property type="term" value="P:transmembrane transport"/>
    <property type="evidence" value="ECO:0000318"/>
    <property type="project" value="GO_Central"/>
</dbReference>
<dbReference type="CDD" id="cd03255">
    <property type="entry name" value="ABC_MJ0796_LolCDE_FtsE"/>
    <property type="match status" value="1"/>
</dbReference>
<dbReference type="FunFam" id="3.40.50.300:FF:000230">
    <property type="entry name" value="Lipoprotein-releasing system ATP-binding protein LolD"/>
    <property type="match status" value="1"/>
</dbReference>
<dbReference type="Gene3D" id="3.40.50.300">
    <property type="entry name" value="P-loop containing nucleotide triphosphate hydrolases"/>
    <property type="match status" value="1"/>
</dbReference>
<dbReference type="InterPro" id="IPR003593">
    <property type="entry name" value="AAA+_ATPase"/>
</dbReference>
<dbReference type="InterPro" id="IPR003439">
    <property type="entry name" value="ABC_transporter-like_ATP-bd"/>
</dbReference>
<dbReference type="InterPro" id="IPR017871">
    <property type="entry name" value="ABC_transporter-like_CS"/>
</dbReference>
<dbReference type="InterPro" id="IPR015854">
    <property type="entry name" value="ABC_transpr_LolD-like"/>
</dbReference>
<dbReference type="InterPro" id="IPR011924">
    <property type="entry name" value="LolD_lipo_ATP-bd"/>
</dbReference>
<dbReference type="InterPro" id="IPR017911">
    <property type="entry name" value="MacB-like_ATP-bd"/>
</dbReference>
<dbReference type="InterPro" id="IPR027417">
    <property type="entry name" value="P-loop_NTPase"/>
</dbReference>
<dbReference type="NCBIfam" id="TIGR02211">
    <property type="entry name" value="LolD_lipo_ex"/>
    <property type="match status" value="1"/>
</dbReference>
<dbReference type="PANTHER" id="PTHR24220">
    <property type="entry name" value="IMPORT ATP-BINDING PROTEIN"/>
    <property type="match status" value="1"/>
</dbReference>
<dbReference type="PANTHER" id="PTHR24220:SF689">
    <property type="entry name" value="LIPOPROTEIN-RELEASING SYSTEM ATP-BINDING PROTEIN LOLD"/>
    <property type="match status" value="1"/>
</dbReference>
<dbReference type="Pfam" id="PF00005">
    <property type="entry name" value="ABC_tran"/>
    <property type="match status" value="1"/>
</dbReference>
<dbReference type="SMART" id="SM00382">
    <property type="entry name" value="AAA"/>
    <property type="match status" value="1"/>
</dbReference>
<dbReference type="SUPFAM" id="SSF52540">
    <property type="entry name" value="P-loop containing nucleoside triphosphate hydrolases"/>
    <property type="match status" value="1"/>
</dbReference>
<dbReference type="PROSITE" id="PS00211">
    <property type="entry name" value="ABC_TRANSPORTER_1"/>
    <property type="match status" value="1"/>
</dbReference>
<dbReference type="PROSITE" id="PS50893">
    <property type="entry name" value="ABC_TRANSPORTER_2"/>
    <property type="match status" value="1"/>
</dbReference>
<dbReference type="PROSITE" id="PS51244">
    <property type="entry name" value="LOLD"/>
    <property type="match status" value="1"/>
</dbReference>
<organism>
    <name type="scientific">Pseudomonas aeruginosa (strain ATCC 15692 / DSM 22644 / CIP 104116 / JCM 14847 / LMG 12228 / 1C / PRS 101 / PAO1)</name>
    <dbReference type="NCBI Taxonomy" id="208964"/>
    <lineage>
        <taxon>Bacteria</taxon>
        <taxon>Pseudomonadati</taxon>
        <taxon>Pseudomonadota</taxon>
        <taxon>Gammaproteobacteria</taxon>
        <taxon>Pseudomonadales</taxon>
        <taxon>Pseudomonadaceae</taxon>
        <taxon>Pseudomonas</taxon>
    </lineage>
</organism>
<reference key="1">
    <citation type="journal article" date="2000" name="Nature">
        <title>Complete genome sequence of Pseudomonas aeruginosa PAO1, an opportunistic pathogen.</title>
        <authorList>
            <person name="Stover C.K."/>
            <person name="Pham X.-Q.T."/>
            <person name="Erwin A.L."/>
            <person name="Mizoguchi S.D."/>
            <person name="Warrener P."/>
            <person name="Hickey M.J."/>
            <person name="Brinkman F.S.L."/>
            <person name="Hufnagle W.O."/>
            <person name="Kowalik D.J."/>
            <person name="Lagrou M."/>
            <person name="Garber R.L."/>
            <person name="Goltry L."/>
            <person name="Tolentino E."/>
            <person name="Westbrock-Wadman S."/>
            <person name="Yuan Y."/>
            <person name="Brody L.L."/>
            <person name="Coulter S.N."/>
            <person name="Folger K.R."/>
            <person name="Kas A."/>
            <person name="Larbig K."/>
            <person name="Lim R.M."/>
            <person name="Smith K.A."/>
            <person name="Spencer D.H."/>
            <person name="Wong G.K.-S."/>
            <person name="Wu Z."/>
            <person name="Paulsen I.T."/>
            <person name="Reizer J."/>
            <person name="Saier M.H. Jr."/>
            <person name="Hancock R.E.W."/>
            <person name="Lory S."/>
            <person name="Olson M.V."/>
        </authorList>
    </citation>
    <scope>NUCLEOTIDE SEQUENCE [LARGE SCALE GENOMIC DNA]</scope>
    <source>
        <strain>ATCC 15692 / DSM 22644 / CIP 104116 / JCM 14847 / LMG 12228 / 1C / PRS 101 / PAO1</strain>
    </source>
</reference>
<comment type="function">
    <text evidence="1">Part of the ABC transporter complex LolCDE involved in the translocation of mature outer membrane-directed lipoproteins, from the inner membrane to the periplasmic chaperone, LolA. Responsible for the formation of the LolA-lipoprotein complex in an ATP-dependent manner.</text>
</comment>
<comment type="subunit">
    <text evidence="1">The complex is composed of two ATP-binding proteins (LolD) and two transmembrane proteins (LolC and LolE).</text>
</comment>
<comment type="subcellular location">
    <subcellularLocation>
        <location evidence="1">Cell inner membrane</location>
        <topology evidence="1">Peripheral membrane protein</topology>
    </subcellularLocation>
</comment>
<comment type="similarity">
    <text evidence="1">Belongs to the ABC transporter superfamily. Lipoprotein translocase (TC 3.A.1.125) family.</text>
</comment>
<gene>
    <name evidence="1" type="primary">lolD</name>
    <name type="ordered locus">PA2987</name>
</gene>
<name>LOLD_PSEAE</name>
<feature type="chain" id="PRO_0000092448" description="Lipoprotein-releasing system ATP-binding protein LolD">
    <location>
        <begin position="1"/>
        <end position="227"/>
    </location>
</feature>
<feature type="domain" description="ABC transporter" evidence="1">
    <location>
        <begin position="7"/>
        <end position="227"/>
    </location>
</feature>
<feature type="binding site" evidence="1">
    <location>
        <begin position="43"/>
        <end position="50"/>
    </location>
    <ligand>
        <name>ATP</name>
        <dbReference type="ChEBI" id="CHEBI:30616"/>
    </ligand>
</feature>
<sequence length="227" mass="24650">MNDKSVLSCRNLSKSYDEGPQSVQVLSGVELNLLPGERVAIVGSSGSGKSTLLNMLGGLDTPSAGSVWLAGEELSALNETARGLLRNRALGFVYQFHHLLPEFTALENVCMPLLIGRTPIAEARQRAAELLERVGLGHRLSHKPAELSGGERQRVAIARALVNRPQLVLLDEPTGNLDQHTAQGIQELMLELSRSLQTSFLVVTHDLQLAGHMDRILRLEEGRLIAA</sequence>
<protein>
    <recommendedName>
        <fullName evidence="1">Lipoprotein-releasing system ATP-binding protein LolD</fullName>
        <ecNumber evidence="1">7.6.2.-</ecNumber>
    </recommendedName>
</protein>
<proteinExistence type="inferred from homology"/>
<evidence type="ECO:0000255" key="1">
    <source>
        <dbReference type="HAMAP-Rule" id="MF_01708"/>
    </source>
</evidence>
<accession>Q9HZL7</accession>
<keyword id="KW-0067">ATP-binding</keyword>
<keyword id="KW-0997">Cell inner membrane</keyword>
<keyword id="KW-1003">Cell membrane</keyword>
<keyword id="KW-0472">Membrane</keyword>
<keyword id="KW-0547">Nucleotide-binding</keyword>
<keyword id="KW-1185">Reference proteome</keyword>
<keyword id="KW-1278">Translocase</keyword>
<keyword id="KW-0813">Transport</keyword>